<keyword id="KW-1005">Bacterial flagellum biogenesis</keyword>
<keyword id="KW-0143">Chaperone</keyword>
<keyword id="KW-0963">Cytoplasm</keyword>
<keyword id="KW-1185">Reference proteome</keyword>
<keyword id="KW-0810">Translation regulation</keyword>
<gene>
    <name evidence="1" type="primary">fliW</name>
    <name type="ordered locus">CKL_2118</name>
</gene>
<comment type="function">
    <text evidence="1">Acts as an anti-CsrA protein, binds CsrA and prevents it from repressing translation of its target genes, one of which is flagellin. Binds to flagellin and participates in the assembly of the flagellum.</text>
</comment>
<comment type="subunit">
    <text evidence="1">Interacts with translational regulator CsrA and flagellin(s).</text>
</comment>
<comment type="subcellular location">
    <subcellularLocation>
        <location evidence="1">Cytoplasm</location>
    </subcellularLocation>
</comment>
<comment type="similarity">
    <text evidence="1">Belongs to the FliW family.</text>
</comment>
<organism>
    <name type="scientific">Clostridium kluyveri (strain ATCC 8527 / DSM 555 / NBRC 12016 / NCIMB 10680 / K1)</name>
    <dbReference type="NCBI Taxonomy" id="431943"/>
    <lineage>
        <taxon>Bacteria</taxon>
        <taxon>Bacillati</taxon>
        <taxon>Bacillota</taxon>
        <taxon>Clostridia</taxon>
        <taxon>Eubacteriales</taxon>
        <taxon>Clostridiaceae</taxon>
        <taxon>Clostridium</taxon>
    </lineage>
</organism>
<evidence type="ECO:0000255" key="1">
    <source>
        <dbReference type="HAMAP-Rule" id="MF_01185"/>
    </source>
</evidence>
<dbReference type="EMBL" id="CP000673">
    <property type="protein sequence ID" value="EDK34130.1"/>
    <property type="molecule type" value="Genomic_DNA"/>
</dbReference>
<dbReference type="RefSeq" id="WP_012102456.1">
    <property type="nucleotide sequence ID" value="NC_009706.1"/>
</dbReference>
<dbReference type="SMR" id="A5MZ34"/>
<dbReference type="STRING" id="431943.CKL_2118"/>
<dbReference type="KEGG" id="ckl:CKL_2118"/>
<dbReference type="eggNOG" id="COG1699">
    <property type="taxonomic scope" value="Bacteria"/>
</dbReference>
<dbReference type="HOGENOM" id="CLU_112356_0_2_9"/>
<dbReference type="Proteomes" id="UP000002411">
    <property type="component" value="Chromosome"/>
</dbReference>
<dbReference type="GO" id="GO:0005737">
    <property type="term" value="C:cytoplasm"/>
    <property type="evidence" value="ECO:0007669"/>
    <property type="project" value="UniProtKB-SubCell"/>
</dbReference>
<dbReference type="GO" id="GO:0044780">
    <property type="term" value="P:bacterial-type flagellum assembly"/>
    <property type="evidence" value="ECO:0007669"/>
    <property type="project" value="UniProtKB-UniRule"/>
</dbReference>
<dbReference type="GO" id="GO:0006417">
    <property type="term" value="P:regulation of translation"/>
    <property type="evidence" value="ECO:0007669"/>
    <property type="project" value="UniProtKB-KW"/>
</dbReference>
<dbReference type="Gene3D" id="2.30.290.10">
    <property type="entry name" value="BH3618-like"/>
    <property type="match status" value="1"/>
</dbReference>
<dbReference type="HAMAP" id="MF_01185">
    <property type="entry name" value="FliW"/>
    <property type="match status" value="1"/>
</dbReference>
<dbReference type="InterPro" id="IPR003775">
    <property type="entry name" value="Flagellar_assembly_factor_FliW"/>
</dbReference>
<dbReference type="InterPro" id="IPR024046">
    <property type="entry name" value="Flagellar_assmbl_FliW_dom_sf"/>
</dbReference>
<dbReference type="NCBIfam" id="NF009793">
    <property type="entry name" value="PRK13285.1-1"/>
    <property type="match status" value="1"/>
</dbReference>
<dbReference type="PANTHER" id="PTHR39190">
    <property type="entry name" value="FLAGELLAR ASSEMBLY FACTOR FLIW"/>
    <property type="match status" value="1"/>
</dbReference>
<dbReference type="PANTHER" id="PTHR39190:SF1">
    <property type="entry name" value="FLAGELLAR ASSEMBLY FACTOR FLIW"/>
    <property type="match status" value="1"/>
</dbReference>
<dbReference type="Pfam" id="PF02623">
    <property type="entry name" value="FliW"/>
    <property type="match status" value="1"/>
</dbReference>
<dbReference type="SUPFAM" id="SSF141457">
    <property type="entry name" value="BH3618-like"/>
    <property type="match status" value="1"/>
</dbReference>
<accession>A5MZ34</accession>
<reference key="1">
    <citation type="journal article" date="2008" name="Proc. Natl. Acad. Sci. U.S.A.">
        <title>The genome of Clostridium kluyveri, a strict anaerobe with unique metabolic features.</title>
        <authorList>
            <person name="Seedorf H."/>
            <person name="Fricke W.F."/>
            <person name="Veith B."/>
            <person name="Brueggemann H."/>
            <person name="Liesegang H."/>
            <person name="Strittmatter A."/>
            <person name="Miethke M."/>
            <person name="Buckel W."/>
            <person name="Hinderberger J."/>
            <person name="Li F."/>
            <person name="Hagemeier C."/>
            <person name="Thauer R.K."/>
            <person name="Gottschalk G."/>
        </authorList>
    </citation>
    <scope>NUCLEOTIDE SEQUENCE [LARGE SCALE GENOMIC DNA]</scope>
    <source>
        <strain>ATCC 8527 / DSM 555 / NBRC 12016 / NCIMB 10680 / K1</strain>
    </source>
</reference>
<sequence>MKLNTKYHGLLEYDEKNIVVFRKGIPGFEHLKKFILVPAEENNLFYILHSIEDENIGIIVASPFDILKDYEFELNEDKTAELKIENMEDIFIVNTVTLNSVLENITINLKAPIVINIKENIGEQLILDKVEYPIKYPLFKGEVSC</sequence>
<protein>
    <recommendedName>
        <fullName evidence="1">Flagellar assembly factor FliW</fullName>
    </recommendedName>
</protein>
<feature type="chain" id="PRO_1000085451" description="Flagellar assembly factor FliW">
    <location>
        <begin position="1"/>
        <end position="145"/>
    </location>
</feature>
<proteinExistence type="inferred from homology"/>
<name>FLIW_CLOK5</name>